<proteinExistence type="inferred from homology"/>
<accession>C1AIU0</accession>
<dbReference type="EC" id="6.1.1.11" evidence="1"/>
<dbReference type="EMBL" id="AP010918">
    <property type="protein sequence ID" value="BAH28169.1"/>
    <property type="molecule type" value="Genomic_DNA"/>
</dbReference>
<dbReference type="RefSeq" id="WP_003420889.1">
    <property type="nucleotide sequence ID" value="NZ_CP014566.1"/>
</dbReference>
<dbReference type="SMR" id="C1AIU0"/>
<dbReference type="GeneID" id="45427835"/>
<dbReference type="KEGG" id="mbt:JTY_3899"/>
<dbReference type="HOGENOM" id="CLU_023797_0_1_11"/>
<dbReference type="UniPathway" id="UPA00906">
    <property type="reaction ID" value="UER00895"/>
</dbReference>
<dbReference type="GO" id="GO:0005737">
    <property type="term" value="C:cytoplasm"/>
    <property type="evidence" value="ECO:0007669"/>
    <property type="project" value="UniProtKB-SubCell"/>
</dbReference>
<dbReference type="GO" id="GO:0005524">
    <property type="term" value="F:ATP binding"/>
    <property type="evidence" value="ECO:0007669"/>
    <property type="project" value="UniProtKB-UniRule"/>
</dbReference>
<dbReference type="GO" id="GO:0004828">
    <property type="term" value="F:serine-tRNA ligase activity"/>
    <property type="evidence" value="ECO:0007669"/>
    <property type="project" value="UniProtKB-UniRule"/>
</dbReference>
<dbReference type="GO" id="GO:0016260">
    <property type="term" value="P:selenocysteine biosynthetic process"/>
    <property type="evidence" value="ECO:0007669"/>
    <property type="project" value="UniProtKB-UniRule"/>
</dbReference>
<dbReference type="GO" id="GO:0006434">
    <property type="term" value="P:seryl-tRNA aminoacylation"/>
    <property type="evidence" value="ECO:0007669"/>
    <property type="project" value="UniProtKB-UniRule"/>
</dbReference>
<dbReference type="CDD" id="cd00770">
    <property type="entry name" value="SerRS_core"/>
    <property type="match status" value="1"/>
</dbReference>
<dbReference type="FunFam" id="1.10.287.40:FF:000004">
    <property type="entry name" value="Serine--tRNA ligase"/>
    <property type="match status" value="1"/>
</dbReference>
<dbReference type="FunFam" id="3.30.930.10:FF:000048">
    <property type="entry name" value="Serine--tRNA ligase"/>
    <property type="match status" value="1"/>
</dbReference>
<dbReference type="Gene3D" id="3.30.930.10">
    <property type="entry name" value="Bira Bifunctional Protein, Domain 2"/>
    <property type="match status" value="1"/>
</dbReference>
<dbReference type="Gene3D" id="1.10.287.40">
    <property type="entry name" value="Serine-tRNA synthetase, tRNA binding domain"/>
    <property type="match status" value="1"/>
</dbReference>
<dbReference type="HAMAP" id="MF_00176">
    <property type="entry name" value="Ser_tRNA_synth_type1"/>
    <property type="match status" value="1"/>
</dbReference>
<dbReference type="InterPro" id="IPR002314">
    <property type="entry name" value="aa-tRNA-synt_IIb"/>
</dbReference>
<dbReference type="InterPro" id="IPR006195">
    <property type="entry name" value="aa-tRNA-synth_II"/>
</dbReference>
<dbReference type="InterPro" id="IPR045864">
    <property type="entry name" value="aa-tRNA-synth_II/BPL/LPL"/>
</dbReference>
<dbReference type="InterPro" id="IPR002317">
    <property type="entry name" value="Ser-tRNA-ligase_type_1"/>
</dbReference>
<dbReference type="InterPro" id="IPR015866">
    <property type="entry name" value="Ser-tRNA-synth_1_N"/>
</dbReference>
<dbReference type="InterPro" id="IPR042103">
    <property type="entry name" value="SerRS_1_N_sf"/>
</dbReference>
<dbReference type="InterPro" id="IPR033729">
    <property type="entry name" value="SerRS_core"/>
</dbReference>
<dbReference type="InterPro" id="IPR010978">
    <property type="entry name" value="tRNA-bd_arm"/>
</dbReference>
<dbReference type="NCBIfam" id="TIGR00414">
    <property type="entry name" value="serS"/>
    <property type="match status" value="1"/>
</dbReference>
<dbReference type="PANTHER" id="PTHR11778">
    <property type="entry name" value="SERYL-TRNA SYNTHETASE"/>
    <property type="match status" value="1"/>
</dbReference>
<dbReference type="Pfam" id="PF02403">
    <property type="entry name" value="Seryl_tRNA_N"/>
    <property type="match status" value="1"/>
</dbReference>
<dbReference type="Pfam" id="PF00587">
    <property type="entry name" value="tRNA-synt_2b"/>
    <property type="match status" value="1"/>
</dbReference>
<dbReference type="PIRSF" id="PIRSF001529">
    <property type="entry name" value="Ser-tRNA-synth_IIa"/>
    <property type="match status" value="1"/>
</dbReference>
<dbReference type="PRINTS" id="PR00981">
    <property type="entry name" value="TRNASYNTHSER"/>
</dbReference>
<dbReference type="SUPFAM" id="SSF55681">
    <property type="entry name" value="Class II aaRS and biotin synthetases"/>
    <property type="match status" value="1"/>
</dbReference>
<dbReference type="SUPFAM" id="SSF46589">
    <property type="entry name" value="tRNA-binding arm"/>
    <property type="match status" value="1"/>
</dbReference>
<dbReference type="PROSITE" id="PS50862">
    <property type="entry name" value="AA_TRNA_LIGASE_II"/>
    <property type="match status" value="1"/>
</dbReference>
<protein>
    <recommendedName>
        <fullName evidence="1">Serine--tRNA ligase</fullName>
        <ecNumber evidence="1">6.1.1.11</ecNumber>
    </recommendedName>
    <alternativeName>
        <fullName evidence="1">Seryl-tRNA synthetase</fullName>
        <shortName evidence="1">SerRS</shortName>
    </alternativeName>
    <alternativeName>
        <fullName evidence="1">Seryl-tRNA(Ser/Sec) synthetase</fullName>
    </alternativeName>
</protein>
<reference key="1">
    <citation type="journal article" date="2009" name="Vaccine">
        <title>Whole genome sequence analysis of Mycobacterium bovis bacillus Calmette-Guerin (BCG) Tokyo 172: a comparative study of BCG vaccine substrains.</title>
        <authorList>
            <person name="Seki M."/>
            <person name="Honda I."/>
            <person name="Fujita I."/>
            <person name="Yano I."/>
            <person name="Yamamoto S."/>
            <person name="Koyama A."/>
        </authorList>
    </citation>
    <scope>NUCLEOTIDE SEQUENCE [LARGE SCALE GENOMIC DNA]</scope>
    <source>
        <strain>BCG / Tokyo 172 / ATCC 35737 / TMC 1019</strain>
    </source>
</reference>
<keyword id="KW-0030">Aminoacyl-tRNA synthetase</keyword>
<keyword id="KW-0067">ATP-binding</keyword>
<keyword id="KW-0963">Cytoplasm</keyword>
<keyword id="KW-0436">Ligase</keyword>
<keyword id="KW-0547">Nucleotide-binding</keyword>
<keyword id="KW-0648">Protein biosynthesis</keyword>
<evidence type="ECO:0000255" key="1">
    <source>
        <dbReference type="HAMAP-Rule" id="MF_00176"/>
    </source>
</evidence>
<gene>
    <name evidence="1" type="primary">serS</name>
    <name type="ordered locus">JTY_3899</name>
</gene>
<comment type="function">
    <text evidence="1">Catalyzes the attachment of serine to tRNA(Ser). Is also able to aminoacylate tRNA(Sec) with serine, to form the misacylated tRNA L-seryl-tRNA(Sec), which will be further converted into selenocysteinyl-tRNA(Sec).</text>
</comment>
<comment type="catalytic activity">
    <reaction evidence="1">
        <text>tRNA(Ser) + L-serine + ATP = L-seryl-tRNA(Ser) + AMP + diphosphate + H(+)</text>
        <dbReference type="Rhea" id="RHEA:12292"/>
        <dbReference type="Rhea" id="RHEA-COMP:9669"/>
        <dbReference type="Rhea" id="RHEA-COMP:9703"/>
        <dbReference type="ChEBI" id="CHEBI:15378"/>
        <dbReference type="ChEBI" id="CHEBI:30616"/>
        <dbReference type="ChEBI" id="CHEBI:33019"/>
        <dbReference type="ChEBI" id="CHEBI:33384"/>
        <dbReference type="ChEBI" id="CHEBI:78442"/>
        <dbReference type="ChEBI" id="CHEBI:78533"/>
        <dbReference type="ChEBI" id="CHEBI:456215"/>
        <dbReference type="EC" id="6.1.1.11"/>
    </reaction>
</comment>
<comment type="catalytic activity">
    <reaction evidence="1">
        <text>tRNA(Sec) + L-serine + ATP = L-seryl-tRNA(Sec) + AMP + diphosphate + H(+)</text>
        <dbReference type="Rhea" id="RHEA:42580"/>
        <dbReference type="Rhea" id="RHEA-COMP:9742"/>
        <dbReference type="Rhea" id="RHEA-COMP:10128"/>
        <dbReference type="ChEBI" id="CHEBI:15378"/>
        <dbReference type="ChEBI" id="CHEBI:30616"/>
        <dbReference type="ChEBI" id="CHEBI:33019"/>
        <dbReference type="ChEBI" id="CHEBI:33384"/>
        <dbReference type="ChEBI" id="CHEBI:78442"/>
        <dbReference type="ChEBI" id="CHEBI:78533"/>
        <dbReference type="ChEBI" id="CHEBI:456215"/>
        <dbReference type="EC" id="6.1.1.11"/>
    </reaction>
</comment>
<comment type="pathway">
    <text evidence="1">Aminoacyl-tRNA biosynthesis; selenocysteinyl-tRNA(Sec) biosynthesis; L-seryl-tRNA(Sec) from L-serine and tRNA(Sec): step 1/1.</text>
</comment>
<comment type="subunit">
    <text evidence="1">Homodimer. The tRNA molecule binds across the dimer.</text>
</comment>
<comment type="subcellular location">
    <subcellularLocation>
        <location evidence="1">Cytoplasm</location>
    </subcellularLocation>
</comment>
<comment type="domain">
    <text evidence="1">Consists of two distinct domains, a catalytic core and a N-terminal extension that is involved in tRNA binding.</text>
</comment>
<comment type="similarity">
    <text evidence="1">Belongs to the class-II aminoacyl-tRNA synthetase family. Type-1 seryl-tRNA synthetase subfamily.</text>
</comment>
<sequence>MIDLKLLRENPDAVRRSQLSRGEDPALVDALLTADAARRAVISTADSLRAEQKAASKSVGGASPEERPPLLRRAKELAEQVKAAEADEVEAEAAFTAAHLAISNVIVDGVPAGGEDDYAVLDVVGEPSYLENPKDHLELGESLGLIDMQRGAKVSGSRFYFLTGRGALLQLGLLQLALKLAVDNGFVPTIPPVLVRPEVMVGTGFLGAHAEEVYRVEGDGLYLVGTSEVPLAGYHSGEILDLSRGPLRYAGWSSCFRREAGSHGKDTRGIIRVHQFDKVEGFVYCTPADAEHEHERLLGWQRQMLARIEVPYRVIDVAAGDLGSSAARKFDCEAWIPTQGAYRELTSTSNCTTFQARRLATRYRDASGKPQIAATLNGTLATTRWLVAILENHQRPDGSVRVPDALVPFVGVEVLEPVA</sequence>
<organism>
    <name type="scientific">Mycobacterium bovis (strain BCG / Tokyo 172 / ATCC 35737 / TMC 1019)</name>
    <dbReference type="NCBI Taxonomy" id="561275"/>
    <lineage>
        <taxon>Bacteria</taxon>
        <taxon>Bacillati</taxon>
        <taxon>Actinomycetota</taxon>
        <taxon>Actinomycetes</taxon>
        <taxon>Mycobacteriales</taxon>
        <taxon>Mycobacteriaceae</taxon>
        <taxon>Mycobacterium</taxon>
        <taxon>Mycobacterium tuberculosis complex</taxon>
    </lineage>
</organism>
<name>SYS_MYCBT</name>
<feature type="chain" id="PRO_1000199494" description="Serine--tRNA ligase">
    <location>
        <begin position="1"/>
        <end position="419"/>
    </location>
</feature>
<feature type="binding site" evidence="1">
    <location>
        <begin position="226"/>
        <end position="228"/>
    </location>
    <ligand>
        <name>L-serine</name>
        <dbReference type="ChEBI" id="CHEBI:33384"/>
    </ligand>
</feature>
<feature type="binding site" evidence="1">
    <location>
        <begin position="257"/>
        <end position="259"/>
    </location>
    <ligand>
        <name>ATP</name>
        <dbReference type="ChEBI" id="CHEBI:30616"/>
    </ligand>
</feature>
<feature type="binding site" evidence="1">
    <location>
        <position position="273"/>
    </location>
    <ligand>
        <name>ATP</name>
        <dbReference type="ChEBI" id="CHEBI:30616"/>
    </ligand>
</feature>
<feature type="binding site" evidence="1">
    <location>
        <position position="280"/>
    </location>
    <ligand>
        <name>L-serine</name>
        <dbReference type="ChEBI" id="CHEBI:33384"/>
    </ligand>
</feature>
<feature type="binding site" evidence="1">
    <location>
        <begin position="344"/>
        <end position="347"/>
    </location>
    <ligand>
        <name>ATP</name>
        <dbReference type="ChEBI" id="CHEBI:30616"/>
    </ligand>
</feature>
<feature type="binding site" evidence="1">
    <location>
        <position position="379"/>
    </location>
    <ligand>
        <name>L-serine</name>
        <dbReference type="ChEBI" id="CHEBI:33384"/>
    </ligand>
</feature>